<proteinExistence type="evidence at protein level"/>
<feature type="signal peptide" evidence="1">
    <location>
        <begin position="1"/>
        <end position="20"/>
    </location>
</feature>
<feature type="propeptide" id="PRO_0000454999" evidence="5">
    <location>
        <begin position="21"/>
        <end position="51"/>
    </location>
</feature>
<feature type="peptide" id="PRO_5013884406" description="Conotoxin Fr3.1" evidence="2">
    <location>
        <begin position="52"/>
        <end position="69"/>
    </location>
</feature>
<feature type="modified residue" description="Pyrrolidone carboxylic acid" evidence="2">
    <location>
        <position position="52"/>
    </location>
</feature>
<feature type="modified residue" description="4-carboxyglutamate" evidence="2">
    <location>
        <position position="54"/>
    </location>
</feature>
<feature type="modified residue" description="4-hydroxyproline" evidence="2">
    <location>
        <position position="58"/>
    </location>
</feature>
<accession>A0A2D1P890</accession>
<evidence type="ECO:0000255" key="1"/>
<evidence type="ECO:0000269" key="2">
    <source>
    </source>
</evidence>
<evidence type="ECO:0000303" key="3">
    <source>
    </source>
</evidence>
<evidence type="ECO:0000305" key="4"/>
<evidence type="ECO:0000305" key="5">
    <source>
    </source>
</evidence>
<evidence type="ECO:0000312" key="6">
    <source>
        <dbReference type="EMBL" id="ATO88041.1"/>
    </source>
</evidence>
<dbReference type="EMBL" id="MF362622">
    <property type="protein sequence ID" value="ATO88041.1"/>
    <property type="molecule type" value="mRNA"/>
</dbReference>
<dbReference type="GO" id="GO:0005576">
    <property type="term" value="C:extracellular region"/>
    <property type="evidence" value="ECO:0007669"/>
    <property type="project" value="UniProtKB-SubCell"/>
</dbReference>
<dbReference type="GO" id="GO:0008200">
    <property type="term" value="F:ion channel inhibitor activity"/>
    <property type="evidence" value="ECO:0007669"/>
    <property type="project" value="InterPro"/>
</dbReference>
<dbReference type="GO" id="GO:0090729">
    <property type="term" value="F:toxin activity"/>
    <property type="evidence" value="ECO:0007669"/>
    <property type="project" value="UniProtKB-KW"/>
</dbReference>
<dbReference type="InterPro" id="IPR004214">
    <property type="entry name" value="Conotoxin"/>
</dbReference>
<dbReference type="Pfam" id="PF02950">
    <property type="entry name" value="Conotoxin"/>
    <property type="match status" value="1"/>
</dbReference>
<protein>
    <recommendedName>
        <fullName evidence="4">Conotoxin Fr3.1</fullName>
    </recommendedName>
    <alternativeName>
        <fullName evidence="3">Conotoxin Fr2091</fullName>
    </alternativeName>
</protein>
<name>CM31_CONFG</name>
<comment type="function">
    <text evidence="4">Probable toxin.</text>
</comment>
<comment type="subcellular location">
    <subcellularLocation>
        <location evidence="2">Secreted</location>
    </subcellularLocation>
</comment>
<comment type="tissue specificity">
    <text evidence="5">Expressed by the venom duct.</text>
</comment>
<comment type="domain">
    <text evidence="4">The cysteine framework is III (CC-C-C-CC). Classified in the M-2 branch, since 2 residues stand between the fourth and the fifth cysteine residues.</text>
</comment>
<comment type="similarity">
    <text evidence="4">Belongs to the conotoxin M superfamily.</text>
</comment>
<reference evidence="6" key="1">
    <citation type="journal article" date="2018" name="J. Proteome Res.">
        <title>Cone Snail Glutaminyl Cyclase Sequences from Transcriptomic Analysis and Mass Spectrometric Characterization of Two Pyroglutamyl Conotoxins.</title>
        <authorList>
            <person name="Vijayasarathy M."/>
            <person name="Basheer S.M."/>
            <person name="Balaram P."/>
        </authorList>
    </citation>
    <scope>NUCLEOTIDE SEQUENCE [MRNA]</scope>
    <scope>PROTEIN SEQUENCE OF 52-69</scope>
    <scope>PYROGLUTAMATE FORMATION AT GLN-52</scope>
    <scope>GAMMA-CARBOXYGLUTAMATION AT GLU-54</scope>
    <scope>HYDROXYLATION AT PRO-58</scope>
    <scope>SUBCELLULAR LOCATION</scope>
    <source>
        <tissue>Venom</tissue>
        <tissue>Venom duct</tissue>
    </source>
</reference>
<organism>
    <name type="scientific">Conus frigidus</name>
    <name type="common">Frigid cone</name>
    <dbReference type="NCBI Taxonomy" id="101755"/>
    <lineage>
        <taxon>Eukaryota</taxon>
        <taxon>Metazoa</taxon>
        <taxon>Spiralia</taxon>
        <taxon>Lophotrochozoa</taxon>
        <taxon>Mollusca</taxon>
        <taxon>Gastropoda</taxon>
        <taxon>Caenogastropoda</taxon>
        <taxon>Neogastropoda</taxon>
        <taxon>Conoidea</taxon>
        <taxon>Conidae</taxon>
        <taxon>Conus</taxon>
        <taxon>Virgiconus</taxon>
    </lineage>
</organism>
<keyword id="KW-0903">Direct protein sequencing</keyword>
<keyword id="KW-0301">Gamma-carboxyglutamic acid</keyword>
<keyword id="KW-0379">Hydroxylation</keyword>
<keyword id="KW-0873">Pyrrolidone carboxylic acid</keyword>
<keyword id="KW-0964">Secreted</keyword>
<keyword id="KW-0732">Signal</keyword>
<keyword id="KW-0800">Toxin</keyword>
<sequence>MLKTGVLLLIFLVLFPLATLQDADQPVERNVENKQDLNLDKRRGMKLLAQRQQECCDPDWCDGACYNCC</sequence>